<comment type="function">
    <text evidence="2">Primarily catalyzes the formation of cysteine and acetate from O-acetylserine and hydrogen sulfide. Can also catalyze the formation of cysteine and acetate from S-sulfocysteine and hydrogen sulfide and the formation of cyanoalanine and hydrogen sulfide from either S-sulfocysteine or O-acetylserine and hydrogen cyanide.</text>
</comment>
<comment type="catalytic activity">
    <reaction evidence="2">
        <text>O-acetyl-L-serine + hydrogen sulfide = L-cysteine + acetate</text>
        <dbReference type="Rhea" id="RHEA:14829"/>
        <dbReference type="ChEBI" id="CHEBI:29919"/>
        <dbReference type="ChEBI" id="CHEBI:30089"/>
        <dbReference type="ChEBI" id="CHEBI:35235"/>
        <dbReference type="ChEBI" id="CHEBI:58340"/>
        <dbReference type="EC" id="2.5.1.47"/>
    </reaction>
</comment>
<comment type="cofactor">
    <cofactor evidence="2">
        <name>pyridoxal 5'-phosphate</name>
        <dbReference type="ChEBI" id="CHEBI:597326"/>
    </cofactor>
</comment>
<comment type="biophysicochemical properties">
    <kinetics>
        <KM evidence="2">2.7 mM for O-acetylserine (at 25 degrees Celsius and pH 7.5)</KM>
        <KM evidence="2">6.5 mM for S-sulfocysteine (at 25 degrees Celsius, pH 8.5 and in absence of dithiothreitol)</KM>
        <KM evidence="2">1.6 mM for sulfide (at 25 degrees Celsius and pH 7.5)</KM>
        <KM evidence="2">2.4 mM for cyanide (at 25 degrees Celsius and pH 7.5)</KM>
    </kinetics>
</comment>
<comment type="pathway">
    <text evidence="3">Amino-acid biosynthesis; L-cysteine biosynthesis; L-cysteine from L-serine: step 2/2.</text>
</comment>
<comment type="subunit">
    <text evidence="2">Homodimer.</text>
</comment>
<comment type="similarity">
    <text evidence="3">Belongs to the cysteine synthase/cystathionine beta-synthase family.</text>
</comment>
<proteinExistence type="evidence at protein level"/>
<feature type="chain" id="PRO_0000433015" description="Cysteine synthase 3">
    <location>
        <begin position="1"/>
        <end position="337"/>
    </location>
</feature>
<feature type="binding site" evidence="1">
    <location>
        <position position="78"/>
    </location>
    <ligand>
        <name>pyridoxal 5'-phosphate</name>
        <dbReference type="ChEBI" id="CHEBI:597326"/>
    </ligand>
</feature>
<feature type="binding site" evidence="1">
    <location>
        <begin position="182"/>
        <end position="186"/>
    </location>
    <ligand>
        <name>pyridoxal 5'-phosphate</name>
        <dbReference type="ChEBI" id="CHEBI:597326"/>
    </ligand>
</feature>
<feature type="binding site" evidence="1">
    <location>
        <position position="270"/>
    </location>
    <ligand>
        <name>pyridoxal 5'-phosphate</name>
        <dbReference type="ChEBI" id="CHEBI:597326"/>
    </ligand>
</feature>
<feature type="modified residue" description="N6-(pyridoxal phosphate)lysine" evidence="1">
    <location>
        <position position="47"/>
    </location>
</feature>
<evidence type="ECO:0000250" key="1">
    <source>
        <dbReference type="UniProtKB" id="P9WP55"/>
    </source>
</evidence>
<evidence type="ECO:0000269" key="2">
    <source>
    </source>
</evidence>
<evidence type="ECO:0000305" key="3"/>
<evidence type="ECO:0000305" key="4">
    <source>
    </source>
</evidence>
<evidence type="ECO:0000312" key="5">
    <source>
        <dbReference type="Proteomes" id="UP000001940"/>
    </source>
</evidence>
<evidence type="ECO:0000312" key="6">
    <source>
        <dbReference type="WormBase" id="R08E5.2"/>
    </source>
</evidence>
<reference evidence="5" key="1">
    <citation type="journal article" date="1998" name="Science">
        <title>Genome sequence of the nematode C. elegans: a platform for investigating biology.</title>
        <authorList>
            <consortium name="The C. elegans sequencing consortium"/>
        </authorList>
    </citation>
    <scope>NUCLEOTIDE SEQUENCE [LARGE SCALE GENOMIC DNA]</scope>
    <source>
        <strain evidence="5">Bristol N2</strain>
    </source>
</reference>
<reference evidence="3" key="2">
    <citation type="journal article" date="2013" name="Biochim. Biophys. Acta">
        <title>Biochemical properties of nematode O-acetylserine(thiol)lyase paralogs imply their distinct roles in hydrogen sulfide homeostasis.</title>
        <authorList>
            <person name="Vozdek R."/>
            <person name="Hnizda A."/>
            <person name="Krijt J."/>
            <person name="Sera L."/>
            <person name="Kozich V."/>
        </authorList>
    </citation>
    <scope>FUNCTION</scope>
    <scope>CATALYTIC ACTIVITY</scope>
    <scope>SUBUNIT</scope>
    <scope>BIOPHYSICOCHEMICAL PROPERTIES</scope>
</reference>
<name>CYSK3_CAEEL</name>
<keyword id="KW-0028">Amino-acid biosynthesis</keyword>
<keyword id="KW-0198">Cysteine biosynthesis</keyword>
<keyword id="KW-0663">Pyridoxal phosphate</keyword>
<keyword id="KW-1185">Reference proteome</keyword>
<keyword id="KW-0808">Transferase</keyword>
<organism evidence="5">
    <name type="scientific">Caenorhabditis elegans</name>
    <dbReference type="NCBI Taxonomy" id="6239"/>
    <lineage>
        <taxon>Eukaryota</taxon>
        <taxon>Metazoa</taxon>
        <taxon>Ecdysozoa</taxon>
        <taxon>Nematoda</taxon>
        <taxon>Chromadorea</taxon>
        <taxon>Rhabditida</taxon>
        <taxon>Rhabditina</taxon>
        <taxon>Rhabditomorpha</taxon>
        <taxon>Rhabditoidea</taxon>
        <taxon>Rhabditidae</taxon>
        <taxon>Peloderinae</taxon>
        <taxon>Caenorhabditis</taxon>
    </lineage>
</organism>
<dbReference type="EC" id="2.5.1.47" evidence="2"/>
<dbReference type="EMBL" id="FO081677">
    <property type="protein sequence ID" value="CCD73276.1"/>
    <property type="molecule type" value="Genomic_DNA"/>
</dbReference>
<dbReference type="PIR" id="C89009">
    <property type="entry name" value="C89009"/>
</dbReference>
<dbReference type="RefSeq" id="NP_504046.1">
    <property type="nucleotide sequence ID" value="NM_071645.7"/>
</dbReference>
<dbReference type="SMR" id="O01592"/>
<dbReference type="FunCoup" id="O01592">
    <property type="interactions" value="307"/>
</dbReference>
<dbReference type="STRING" id="6239.R08E5.2.1"/>
<dbReference type="PaxDb" id="6239-R08E5.2a"/>
<dbReference type="PeptideAtlas" id="O01592"/>
<dbReference type="EnsemblMetazoa" id="R08E5.2.1">
    <property type="protein sequence ID" value="R08E5.2.1"/>
    <property type="gene ID" value="WBGene00019962"/>
</dbReference>
<dbReference type="GeneID" id="259617"/>
<dbReference type="KEGG" id="cel:CELE_R08E5.2"/>
<dbReference type="UCSC" id="R08E5.2a">
    <property type="organism name" value="c. elegans"/>
</dbReference>
<dbReference type="AGR" id="WB:WBGene00019962"/>
<dbReference type="CTD" id="259617"/>
<dbReference type="WormBase" id="R08E5.2">
    <property type="protein sequence ID" value="CE12574"/>
    <property type="gene ID" value="WBGene00019962"/>
    <property type="gene designation" value="cysl-3"/>
</dbReference>
<dbReference type="eggNOG" id="KOG1252">
    <property type="taxonomic scope" value="Eukaryota"/>
</dbReference>
<dbReference type="GeneTree" id="ENSGT00970000196093"/>
<dbReference type="InParanoid" id="O01592"/>
<dbReference type="OMA" id="WMADYGF"/>
<dbReference type="OrthoDB" id="10259545at2759"/>
<dbReference type="PhylomeDB" id="O01592"/>
<dbReference type="SABIO-RK" id="O01592"/>
<dbReference type="UniPathway" id="UPA00136">
    <property type="reaction ID" value="UER00200"/>
</dbReference>
<dbReference type="PRO" id="PR:O01592"/>
<dbReference type="Proteomes" id="UP000001940">
    <property type="component" value="Chromosome V"/>
</dbReference>
<dbReference type="Bgee" id="WBGene00019962">
    <property type="expression patterns" value="Expressed in embryo and 4 other cell types or tissues"/>
</dbReference>
<dbReference type="GO" id="GO:0005737">
    <property type="term" value="C:cytoplasm"/>
    <property type="evidence" value="ECO:0000318"/>
    <property type="project" value="GO_Central"/>
</dbReference>
<dbReference type="GO" id="GO:0004124">
    <property type="term" value="F:cysteine synthase activity"/>
    <property type="evidence" value="ECO:0000314"/>
    <property type="project" value="WormBase"/>
</dbReference>
<dbReference type="GO" id="GO:0006535">
    <property type="term" value="P:cysteine biosynthetic process from serine"/>
    <property type="evidence" value="ECO:0000314"/>
    <property type="project" value="WormBase"/>
</dbReference>
<dbReference type="CDD" id="cd01561">
    <property type="entry name" value="CBS_like"/>
    <property type="match status" value="1"/>
</dbReference>
<dbReference type="FunFam" id="3.40.50.1100:FF:000002">
    <property type="entry name" value="Cysteine synthase"/>
    <property type="match status" value="1"/>
</dbReference>
<dbReference type="FunFam" id="3.40.50.1100:FF:000197">
    <property type="entry name" value="Os06g0564600 protein"/>
    <property type="match status" value="1"/>
</dbReference>
<dbReference type="Gene3D" id="3.40.50.1100">
    <property type="match status" value="2"/>
</dbReference>
<dbReference type="InterPro" id="IPR005856">
    <property type="entry name" value="Cys_synth"/>
</dbReference>
<dbReference type="InterPro" id="IPR050214">
    <property type="entry name" value="Cys_Synth/Cystath_Beta-Synth"/>
</dbReference>
<dbReference type="InterPro" id="IPR005859">
    <property type="entry name" value="CysK"/>
</dbReference>
<dbReference type="InterPro" id="IPR001216">
    <property type="entry name" value="P-phosphate_BS"/>
</dbReference>
<dbReference type="InterPro" id="IPR001926">
    <property type="entry name" value="TrpB-like_PALP"/>
</dbReference>
<dbReference type="InterPro" id="IPR036052">
    <property type="entry name" value="TrpB-like_PALP_sf"/>
</dbReference>
<dbReference type="NCBIfam" id="TIGR01139">
    <property type="entry name" value="cysK"/>
    <property type="match status" value="1"/>
</dbReference>
<dbReference type="NCBIfam" id="TIGR01136">
    <property type="entry name" value="cysKM"/>
    <property type="match status" value="1"/>
</dbReference>
<dbReference type="PANTHER" id="PTHR10314">
    <property type="entry name" value="CYSTATHIONINE BETA-SYNTHASE"/>
    <property type="match status" value="1"/>
</dbReference>
<dbReference type="Pfam" id="PF00291">
    <property type="entry name" value="PALP"/>
    <property type="match status" value="1"/>
</dbReference>
<dbReference type="SUPFAM" id="SSF53686">
    <property type="entry name" value="Tryptophan synthase beta subunit-like PLP-dependent enzymes"/>
    <property type="match status" value="1"/>
</dbReference>
<dbReference type="PROSITE" id="PS00901">
    <property type="entry name" value="CYS_SYNTHASE"/>
    <property type="match status" value="1"/>
</dbReference>
<accession>O01592</accession>
<accession>H2L0J5</accession>
<accession>Q86NC6</accession>
<sequence>MSRELMVQDSGDTIGNTPLVLLRNISKGLDARIAVKVEYLNPSCSVKDRIAKSMVDEAEKAGTIVPGKTVLVEGTSGNLGIALAHIGKIRGYKVILVMPATMSVERRAMLRAYGAEVILSDPAEGHPGVIKKVEMLVDKLPNAHCLDQFSNPANPAAHYRTTGPEIWRQTEGKVDIVCFGVGSSGTVTGVGRYLREQNPNIEIYPVEPYESSVLSGLPRGPHKIQGIGAGIVPGNVDRSLFTEILRIKSDDAMQMARRLADEEAILGGISSGANVVAAVELASRPENKGKLIVTTVNSFAERYFTTELYSDVLNEVSQLTFSSDDEAMGIAKKYLGL</sequence>
<protein>
    <recommendedName>
        <fullName evidence="3">Cysteine synthase 3</fullName>
        <ecNumber evidence="2">2.5.1.47</ecNumber>
    </recommendedName>
    <alternativeName>
        <fullName evidence="4">O-acetylserine (thiol)-lyase 3</fullName>
        <shortName evidence="4">OAS-TL</shortName>
    </alternativeName>
</protein>
<gene>
    <name evidence="6" type="primary">cysl-3</name>
    <name evidence="6" type="ORF">R08E5.2</name>
</gene>